<organism>
    <name type="scientific">Homo sapiens</name>
    <name type="common">Human</name>
    <dbReference type="NCBI Taxonomy" id="9606"/>
    <lineage>
        <taxon>Eukaryota</taxon>
        <taxon>Metazoa</taxon>
        <taxon>Chordata</taxon>
        <taxon>Craniata</taxon>
        <taxon>Vertebrata</taxon>
        <taxon>Euteleostomi</taxon>
        <taxon>Mammalia</taxon>
        <taxon>Eutheria</taxon>
        <taxon>Euarchontoglires</taxon>
        <taxon>Primates</taxon>
        <taxon>Haplorrhini</taxon>
        <taxon>Catarrhini</taxon>
        <taxon>Hominidae</taxon>
        <taxon>Homo</taxon>
    </lineage>
</organism>
<proteinExistence type="uncertain"/>
<keyword id="KW-1003">Cell membrane</keyword>
<keyword id="KW-1015">Disulfide bond</keyword>
<keyword id="KW-0297">G-protein coupled receptor</keyword>
<keyword id="KW-0325">Glycoprotein</keyword>
<keyword id="KW-0472">Membrane</keyword>
<keyword id="KW-0552">Olfaction</keyword>
<keyword id="KW-0675">Receptor</keyword>
<keyword id="KW-1185">Reference proteome</keyword>
<keyword id="KW-0716">Sensory transduction</keyword>
<keyword id="KW-0807">Transducer</keyword>
<keyword id="KW-0812">Transmembrane</keyword>
<keyword id="KW-1133">Transmembrane helix</keyword>
<evidence type="ECO:0000255" key="1"/>
<evidence type="ECO:0000255" key="2">
    <source>
        <dbReference type="PROSITE-ProRule" id="PRU00521"/>
    </source>
</evidence>
<evidence type="ECO:0000305" key="3"/>
<evidence type="ECO:0000312" key="4">
    <source>
        <dbReference type="HGNC" id="HGNC:13964"/>
    </source>
</evidence>
<name>OR1FC_HUMAN</name>
<sequence length="337" mass="36933">MEGKNQTNISEFLLLGFSSWQQQQVLLFALFLCLYLTGLFGNLLILLAIGSDHCLHTPMYFFLANLSLVDLCLPSATVPKMLLNIQTQTQTISYPGCLAQMYFCMMFANMDNFLLTVMAYDRYVAICHPLHYSTIMALRLCASLVAAPWVIAILNPLLHTLMMAHLHFCSDNVIHHFFCDINSLLPLSCSDTSLNQLSVLATVGLIFVVPSVCILVSYILIVSAVMKVPSAQGKLKAFSTCGSHLALVILFYGAITGVYMSPLSNHSTEKDSAASVIFMVVAPVLNPFIYSLRNNELKGTLKKTLSRPGAVAHACNPSTLGGRGGWIMRSGDRDHPG</sequence>
<gene>
    <name evidence="4" type="primary">OR1F12P</name>
    <name type="synonym">OR1F12</name>
</gene>
<feature type="chain" id="PRO_0000150433" description="Putative olfactory receptor 1F12P">
    <location>
        <begin position="1"/>
        <end position="337"/>
    </location>
</feature>
<feature type="topological domain" description="Extracellular" evidence="1">
    <location>
        <begin position="1"/>
        <end position="25"/>
    </location>
</feature>
<feature type="transmembrane region" description="Helical; Name=1" evidence="1">
    <location>
        <begin position="26"/>
        <end position="49"/>
    </location>
</feature>
<feature type="topological domain" description="Cytoplasmic" evidence="1">
    <location>
        <begin position="50"/>
        <end position="57"/>
    </location>
</feature>
<feature type="transmembrane region" description="Helical; Name=2" evidence="1">
    <location>
        <begin position="58"/>
        <end position="79"/>
    </location>
</feature>
<feature type="topological domain" description="Extracellular" evidence="1">
    <location>
        <begin position="80"/>
        <end position="100"/>
    </location>
</feature>
<feature type="transmembrane region" description="Helical; Name=3" evidence="1">
    <location>
        <begin position="101"/>
        <end position="120"/>
    </location>
</feature>
<feature type="topological domain" description="Cytoplasmic" evidence="1">
    <location>
        <begin position="121"/>
        <end position="139"/>
    </location>
</feature>
<feature type="transmembrane region" description="Helical; Name=4" evidence="1">
    <location>
        <begin position="140"/>
        <end position="158"/>
    </location>
</feature>
<feature type="topological domain" description="Extracellular" evidence="1">
    <location>
        <begin position="159"/>
        <end position="196"/>
    </location>
</feature>
<feature type="transmembrane region" description="Helical; Name=5" evidence="1">
    <location>
        <begin position="197"/>
        <end position="219"/>
    </location>
</feature>
<feature type="topological domain" description="Cytoplasmic" evidence="1">
    <location>
        <begin position="220"/>
        <end position="236"/>
    </location>
</feature>
<feature type="transmembrane region" description="Helical; Name=6" evidence="1">
    <location>
        <begin position="237"/>
        <end position="259"/>
    </location>
</feature>
<feature type="topological domain" description="Extracellular" evidence="1">
    <location>
        <begin position="260"/>
        <end position="272"/>
    </location>
</feature>
<feature type="transmembrane region" description="Helical; Name=7" evidence="1">
    <location>
        <begin position="273"/>
        <end position="292"/>
    </location>
</feature>
<feature type="topological domain" description="Cytoplasmic" evidence="1">
    <location>
        <begin position="293"/>
        <end position="337"/>
    </location>
</feature>
<feature type="glycosylation site" description="N-linked (GlcNAc...) asparagine" evidence="1">
    <location>
        <position position="5"/>
    </location>
</feature>
<feature type="glycosylation site" description="N-linked (GlcNAc...) asparagine" evidence="1">
    <location>
        <position position="8"/>
    </location>
</feature>
<feature type="glycosylation site" description="N-linked (GlcNAc...) asparagine" evidence="1">
    <location>
        <position position="265"/>
    </location>
</feature>
<feature type="disulfide bond" evidence="2">
    <location>
        <begin position="97"/>
        <end position="189"/>
    </location>
</feature>
<protein>
    <recommendedName>
        <fullName evidence="3">Putative olfactory receptor 1F12P</fullName>
    </recommendedName>
    <alternativeName>
        <fullName>Hs6M1-35P</fullName>
    </alternativeName>
</protein>
<comment type="function">
    <text evidence="3">Odorant receptor.</text>
</comment>
<comment type="subcellular location">
    <subcellularLocation>
        <location>Cell membrane</location>
        <topology>Multi-pass membrane protein</topology>
    </subcellularLocation>
</comment>
<comment type="similarity">
    <text evidence="2">Belongs to the G-protein coupled receptor 1 family.</text>
</comment>
<comment type="caution">
    <text evidence="3">Could be the product of a pseudogene.</text>
</comment>
<comment type="online information" name="Human Olfactory Receptor Data Exploratorium (HORDE)">
    <link uri="http://genome.weizmann.ac.il/horde/card/index/symbol:OR1F12"/>
</comment>
<dbReference type="EMBL" id="AB065468">
    <property type="protein sequence ID" value="BAC05727.1"/>
    <property type="molecule type" value="Genomic_DNA"/>
</dbReference>
<dbReference type="EMBL" id="AL121944">
    <property type="status" value="NOT_ANNOTATED_CDS"/>
    <property type="molecule type" value="Genomic_DNA"/>
</dbReference>
<dbReference type="SMR" id="Q8NHA8"/>
<dbReference type="FunCoup" id="Q8NHA8">
    <property type="interactions" value="801"/>
</dbReference>
<dbReference type="IntAct" id="Q8NHA8">
    <property type="interactions" value="1"/>
</dbReference>
<dbReference type="GlyCosmos" id="Q8NHA8">
    <property type="glycosylation" value="3 sites, No reported glycans"/>
</dbReference>
<dbReference type="GlyGen" id="Q8NHA8">
    <property type="glycosylation" value="4 sites, 1 O-linked glycan (1 site)"/>
</dbReference>
<dbReference type="iPTMnet" id="Q8NHA8"/>
<dbReference type="BioMuta" id="HGNC:13964"/>
<dbReference type="DMDM" id="38372833"/>
<dbReference type="MassIVE" id="Q8NHA8"/>
<dbReference type="PeptideAtlas" id="Q8NHA8"/>
<dbReference type="AGR" id="HGNC:13964"/>
<dbReference type="GeneCards" id="OR1F12P"/>
<dbReference type="HGNC" id="HGNC:13964">
    <property type="gene designation" value="OR1F12P"/>
</dbReference>
<dbReference type="neXtProt" id="NX_Q8NHA8"/>
<dbReference type="InParanoid" id="Q8NHA8"/>
<dbReference type="PAN-GO" id="Q8NHA8">
    <property type="GO annotations" value="3 GO annotations based on evolutionary models"/>
</dbReference>
<dbReference type="PhylomeDB" id="Q8NHA8"/>
<dbReference type="PathwayCommons" id="Q8NHA8"/>
<dbReference type="Reactome" id="R-HSA-9752946">
    <property type="pathway name" value="Expression and translocation of olfactory receptors"/>
</dbReference>
<dbReference type="Pharos" id="Q8NHA8">
    <property type="development level" value="Tdark"/>
</dbReference>
<dbReference type="PRO" id="PR:Q8NHA8"/>
<dbReference type="Proteomes" id="UP000005640">
    <property type="component" value="Unplaced"/>
</dbReference>
<dbReference type="RNAct" id="Q8NHA8">
    <property type="molecule type" value="protein"/>
</dbReference>
<dbReference type="GO" id="GO:0005886">
    <property type="term" value="C:plasma membrane"/>
    <property type="evidence" value="ECO:0000318"/>
    <property type="project" value="GO_Central"/>
</dbReference>
<dbReference type="GO" id="GO:0004930">
    <property type="term" value="F:G protein-coupled receptor activity"/>
    <property type="evidence" value="ECO:0007669"/>
    <property type="project" value="UniProtKB-KW"/>
</dbReference>
<dbReference type="GO" id="GO:0004984">
    <property type="term" value="F:olfactory receptor activity"/>
    <property type="evidence" value="ECO:0000318"/>
    <property type="project" value="GO_Central"/>
</dbReference>
<dbReference type="GO" id="GO:0007165">
    <property type="term" value="P:signal transduction"/>
    <property type="evidence" value="ECO:0000318"/>
    <property type="project" value="GO_Central"/>
</dbReference>
<dbReference type="CDD" id="cd15918">
    <property type="entry name" value="7tmA_OR1_7-like"/>
    <property type="match status" value="1"/>
</dbReference>
<dbReference type="FunFam" id="1.20.1070.10:FF:000009">
    <property type="entry name" value="Olfactory receptor"/>
    <property type="match status" value="1"/>
</dbReference>
<dbReference type="Gene3D" id="1.20.1070.10">
    <property type="entry name" value="Rhodopsin 7-helix transmembrane proteins"/>
    <property type="match status" value="1"/>
</dbReference>
<dbReference type="InterPro" id="IPR000276">
    <property type="entry name" value="GPCR_Rhodpsn"/>
</dbReference>
<dbReference type="InterPro" id="IPR017452">
    <property type="entry name" value="GPCR_Rhodpsn_7TM"/>
</dbReference>
<dbReference type="InterPro" id="IPR000725">
    <property type="entry name" value="Olfact_rcpt"/>
</dbReference>
<dbReference type="PANTHER" id="PTHR48001">
    <property type="entry name" value="OLFACTORY RECEPTOR"/>
    <property type="match status" value="1"/>
</dbReference>
<dbReference type="Pfam" id="PF13853">
    <property type="entry name" value="7tm_4"/>
    <property type="match status" value="1"/>
</dbReference>
<dbReference type="PRINTS" id="PR00237">
    <property type="entry name" value="GPCRRHODOPSN"/>
</dbReference>
<dbReference type="PRINTS" id="PR00245">
    <property type="entry name" value="OLFACTORYR"/>
</dbReference>
<dbReference type="SUPFAM" id="SSF81321">
    <property type="entry name" value="Family A G protein-coupled receptor-like"/>
    <property type="match status" value="1"/>
</dbReference>
<dbReference type="PROSITE" id="PS00237">
    <property type="entry name" value="G_PROTEIN_RECEP_F1_1"/>
    <property type="match status" value="1"/>
</dbReference>
<dbReference type="PROSITE" id="PS50262">
    <property type="entry name" value="G_PROTEIN_RECEP_F1_2"/>
    <property type="match status" value="1"/>
</dbReference>
<accession>Q8NHA8</accession>
<reference key="1">
    <citation type="submission" date="2001-07" db="EMBL/GenBank/DDBJ databases">
        <title>Genome-wide discovery and analysis of human seven transmembrane helix receptor genes.</title>
        <authorList>
            <person name="Suwa M."/>
            <person name="Sato T."/>
            <person name="Okouchi I."/>
            <person name="Arita M."/>
            <person name="Futami K."/>
            <person name="Matsumoto S."/>
            <person name="Tsutsumi S."/>
            <person name="Aburatani H."/>
            <person name="Asai K."/>
            <person name="Akiyama Y."/>
        </authorList>
    </citation>
    <scope>NUCLEOTIDE SEQUENCE [GENOMIC DNA]</scope>
</reference>
<reference key="2">
    <citation type="journal article" date="2003" name="Nature">
        <title>The DNA sequence and analysis of human chromosome 6.</title>
        <authorList>
            <person name="Mungall A.J."/>
            <person name="Palmer S.A."/>
            <person name="Sims S.K."/>
            <person name="Edwards C.A."/>
            <person name="Ashurst J.L."/>
            <person name="Wilming L."/>
            <person name="Jones M.C."/>
            <person name="Horton R."/>
            <person name="Hunt S.E."/>
            <person name="Scott C.E."/>
            <person name="Gilbert J.G.R."/>
            <person name="Clamp M.E."/>
            <person name="Bethel G."/>
            <person name="Milne S."/>
            <person name="Ainscough R."/>
            <person name="Almeida J.P."/>
            <person name="Ambrose K.D."/>
            <person name="Andrews T.D."/>
            <person name="Ashwell R.I.S."/>
            <person name="Babbage A.K."/>
            <person name="Bagguley C.L."/>
            <person name="Bailey J."/>
            <person name="Banerjee R."/>
            <person name="Barker D.J."/>
            <person name="Barlow K.F."/>
            <person name="Bates K."/>
            <person name="Beare D.M."/>
            <person name="Beasley H."/>
            <person name="Beasley O."/>
            <person name="Bird C.P."/>
            <person name="Blakey S.E."/>
            <person name="Bray-Allen S."/>
            <person name="Brook J."/>
            <person name="Brown A.J."/>
            <person name="Brown J.Y."/>
            <person name="Burford D.C."/>
            <person name="Burrill W."/>
            <person name="Burton J."/>
            <person name="Carder C."/>
            <person name="Carter N.P."/>
            <person name="Chapman J.C."/>
            <person name="Clark S.Y."/>
            <person name="Clark G."/>
            <person name="Clee C.M."/>
            <person name="Clegg S."/>
            <person name="Cobley V."/>
            <person name="Collier R.E."/>
            <person name="Collins J.E."/>
            <person name="Colman L.K."/>
            <person name="Corby N.R."/>
            <person name="Coville G.J."/>
            <person name="Culley K.M."/>
            <person name="Dhami P."/>
            <person name="Davies J."/>
            <person name="Dunn M."/>
            <person name="Earthrowl M.E."/>
            <person name="Ellington A.E."/>
            <person name="Evans K.A."/>
            <person name="Faulkner L."/>
            <person name="Francis M.D."/>
            <person name="Frankish A."/>
            <person name="Frankland J."/>
            <person name="French L."/>
            <person name="Garner P."/>
            <person name="Garnett J."/>
            <person name="Ghori M.J."/>
            <person name="Gilby L.M."/>
            <person name="Gillson C.J."/>
            <person name="Glithero R.J."/>
            <person name="Grafham D.V."/>
            <person name="Grant M."/>
            <person name="Gribble S."/>
            <person name="Griffiths C."/>
            <person name="Griffiths M.N.D."/>
            <person name="Hall R."/>
            <person name="Halls K.S."/>
            <person name="Hammond S."/>
            <person name="Harley J.L."/>
            <person name="Hart E.A."/>
            <person name="Heath P.D."/>
            <person name="Heathcott R."/>
            <person name="Holmes S.J."/>
            <person name="Howden P.J."/>
            <person name="Howe K.L."/>
            <person name="Howell G.R."/>
            <person name="Huckle E."/>
            <person name="Humphray S.J."/>
            <person name="Humphries M.D."/>
            <person name="Hunt A.R."/>
            <person name="Johnson C.M."/>
            <person name="Joy A.A."/>
            <person name="Kay M."/>
            <person name="Keenan S.J."/>
            <person name="Kimberley A.M."/>
            <person name="King A."/>
            <person name="Laird G.K."/>
            <person name="Langford C."/>
            <person name="Lawlor S."/>
            <person name="Leongamornlert D.A."/>
            <person name="Leversha M."/>
            <person name="Lloyd C.R."/>
            <person name="Lloyd D.M."/>
            <person name="Loveland J.E."/>
            <person name="Lovell J."/>
            <person name="Martin S."/>
            <person name="Mashreghi-Mohammadi M."/>
            <person name="Maslen G.L."/>
            <person name="Matthews L."/>
            <person name="McCann O.T."/>
            <person name="McLaren S.J."/>
            <person name="McLay K."/>
            <person name="McMurray A."/>
            <person name="Moore M.J.F."/>
            <person name="Mullikin J.C."/>
            <person name="Niblett D."/>
            <person name="Nickerson T."/>
            <person name="Novik K.L."/>
            <person name="Oliver K."/>
            <person name="Overton-Larty E.K."/>
            <person name="Parker A."/>
            <person name="Patel R."/>
            <person name="Pearce A.V."/>
            <person name="Peck A.I."/>
            <person name="Phillimore B.J.C.T."/>
            <person name="Phillips S."/>
            <person name="Plumb R.W."/>
            <person name="Porter K.M."/>
            <person name="Ramsey Y."/>
            <person name="Ranby S.A."/>
            <person name="Rice C.M."/>
            <person name="Ross M.T."/>
            <person name="Searle S.M."/>
            <person name="Sehra H.K."/>
            <person name="Sheridan E."/>
            <person name="Skuce C.D."/>
            <person name="Smith S."/>
            <person name="Smith M."/>
            <person name="Spraggon L."/>
            <person name="Squares S.L."/>
            <person name="Steward C.A."/>
            <person name="Sycamore N."/>
            <person name="Tamlyn-Hall G."/>
            <person name="Tester J."/>
            <person name="Theaker A.J."/>
            <person name="Thomas D.W."/>
            <person name="Thorpe A."/>
            <person name="Tracey A."/>
            <person name="Tromans A."/>
            <person name="Tubby B."/>
            <person name="Wall M."/>
            <person name="Wallis J.M."/>
            <person name="West A.P."/>
            <person name="White S.S."/>
            <person name="Whitehead S.L."/>
            <person name="Whittaker H."/>
            <person name="Wild A."/>
            <person name="Willey D.J."/>
            <person name="Wilmer T.E."/>
            <person name="Wood J.M."/>
            <person name="Wray P.W."/>
            <person name="Wyatt J.C."/>
            <person name="Young L."/>
            <person name="Younger R.M."/>
            <person name="Bentley D.R."/>
            <person name="Coulson A."/>
            <person name="Durbin R.M."/>
            <person name="Hubbard T."/>
            <person name="Sulston J.E."/>
            <person name="Dunham I."/>
            <person name="Rogers J."/>
            <person name="Beck S."/>
        </authorList>
    </citation>
    <scope>NUCLEOTIDE SEQUENCE [LARGE SCALE GENOMIC DNA]</scope>
</reference>